<protein>
    <recommendedName>
        <fullName>Mitogen-activated protein kinase 7</fullName>
        <shortName>MAP kinase 7</shortName>
        <shortName>MAPK 7</shortName>
        <ecNumber>2.7.11.24</ecNumber>
    </recommendedName>
    <alternativeName>
        <fullName>Big MAP kinase 1</fullName>
        <shortName>BMK-1</shortName>
    </alternativeName>
    <alternativeName>
        <fullName>Extracellular signal-regulated kinase 5</fullName>
        <shortName>ERK-5</shortName>
    </alternativeName>
</protein>
<gene>
    <name type="primary">Mapk7</name>
    <name type="synonym">Bmk1</name>
    <name type="synonym">Erk5</name>
</gene>
<sequence length="806" mass="87733">MAEPLKEEDGEDGSGEPPGRVKAEPVHTAASVVAKNLALLKARSFDVTFDVGDEYEIIETIGNGAYGVVSSARRRLTGQQVAIKKIPNAFDVVTNAKRTLRELKILKHFKHDNIIAIKDILKPTVPYGEFRSVYVVLDLMESDLHQIIHSSQPLTLEHVRYFLYQLLRGLKYMHSAQVIHRDLKPSNLLVNENCELKIGDFGMARGLCTSPAEHQYFMTEYVATRWYRAPELMLSLHEYTQAIDLWSVGCIFGEMLARRQLFPGKNYVHQLQLIMMVLGTPSPAVIQAVGAERVRAYIQSLPPRQPVPWETVYPGADRQALSLLGRMLRFEPSARISAAAALRHPFLAKYHDPDDEPDCAPPFDFAFDREALTRERIKEAIVAEIEDFHARREGIRQQIRFQPSLQPVASEPVCPDVEMPSPWAPSGDCAMESPPPALPPCSDPAPDTVDLTLQPAPPASELAPPKREGAISDNTKAALKAALLKSLRSRLRDGPSAPLEAPEPRKPVTAQERQREREEKRRRRQERAKEREKRRQERERKERGAGTLGGPSTDPLAGLVLSDNDRSLLERWTRMARPPAPAPAPAPAPAPAPSSAQPTSTPTGPVSQSTGPLQPAGSIPGPASQPVCPPPGPVPQPAGPIPAPLQTAPSTSLLASQSLVPPSGLPGSGAPEVLPYFPSGPPPPDPGLTPQPSTSESPDVNLVTQQLSKSQVEDPLPPVFSGTPKGSGAGYGVGFDLEEFLNQSFDMGVADGPQDGQADSASLSASLLADWLEGHGMNPADIESLQREIQMDSPMLLSDLPDLQEP</sequence>
<reference key="1">
    <citation type="journal article" date="1999" name="J. Biol. Chem.">
        <title>Activation of the protein kinase ERK5/BMK1 by receptor tyrosine kinases. Identification and characterization of a signaling pathway to the nucleus.</title>
        <authorList>
            <person name="Kamakura S."/>
            <person name="Moriguchi T."/>
            <person name="Nishida E."/>
        </authorList>
    </citation>
    <scope>NUCLEOTIDE SEQUENCE [MRNA]</scope>
</reference>
<reference key="2">
    <citation type="journal article" date="2001" name="J. Biol. Chem.">
        <title>Molecular cloning of mouse ERK5/BMK1 splice variants and characterization of ERK5 functional domains.</title>
        <authorList>
            <person name="Yan C."/>
            <person name="Luo H."/>
            <person name="Lee J.-D."/>
            <person name="Abe J.-I."/>
            <person name="Berk B.C."/>
        </authorList>
    </citation>
    <scope>NUCLEOTIDE SEQUENCE [MRNA] (ISOFORMS 1; 2 AND 3)</scope>
    <scope>FUNCTION</scope>
    <scope>SUBUNIT</scope>
    <scope>SUBCELLULAR LOCATION</scope>
    <scope>TISSUE SPECIFICITY</scope>
    <source>
        <strain>C57BL/6J</strain>
    </source>
</reference>
<reference key="3">
    <citation type="journal article" date="2005" name="Gene">
        <title>Identification and characterization of mErk5-T, a novel Erk5/Bmk1 splice variant.</title>
        <authorList>
            <person name="McCaw B.J."/>
            <person name="Chow S.Y."/>
            <person name="Wong E.S.M."/>
            <person name="Tan K.L."/>
            <person name="Guo H."/>
            <person name="Guy G.R."/>
        </authorList>
    </citation>
    <scope>NUCLEOTIDE SEQUENCE [MRNA] (ISOFORM 4)</scope>
    <scope>FUNCTION</scope>
    <source>
        <strain>C57BL/6J</strain>
        <tissue>Bone marrow</tissue>
    </source>
</reference>
<reference key="4">
    <citation type="journal article" date="2005" name="Science">
        <title>The transcriptional landscape of the mammalian genome.</title>
        <authorList>
            <person name="Carninci P."/>
            <person name="Kasukawa T."/>
            <person name="Katayama S."/>
            <person name="Gough J."/>
            <person name="Frith M.C."/>
            <person name="Maeda N."/>
            <person name="Oyama R."/>
            <person name="Ravasi T."/>
            <person name="Lenhard B."/>
            <person name="Wells C."/>
            <person name="Kodzius R."/>
            <person name="Shimokawa K."/>
            <person name="Bajic V.B."/>
            <person name="Brenner S.E."/>
            <person name="Batalov S."/>
            <person name="Forrest A.R."/>
            <person name="Zavolan M."/>
            <person name="Davis M.J."/>
            <person name="Wilming L.G."/>
            <person name="Aidinis V."/>
            <person name="Allen J.E."/>
            <person name="Ambesi-Impiombato A."/>
            <person name="Apweiler R."/>
            <person name="Aturaliya R.N."/>
            <person name="Bailey T.L."/>
            <person name="Bansal M."/>
            <person name="Baxter L."/>
            <person name="Beisel K.W."/>
            <person name="Bersano T."/>
            <person name="Bono H."/>
            <person name="Chalk A.M."/>
            <person name="Chiu K.P."/>
            <person name="Choudhary V."/>
            <person name="Christoffels A."/>
            <person name="Clutterbuck D.R."/>
            <person name="Crowe M.L."/>
            <person name="Dalla E."/>
            <person name="Dalrymple B.P."/>
            <person name="de Bono B."/>
            <person name="Della Gatta G."/>
            <person name="di Bernardo D."/>
            <person name="Down T."/>
            <person name="Engstrom P."/>
            <person name="Fagiolini M."/>
            <person name="Faulkner G."/>
            <person name="Fletcher C.F."/>
            <person name="Fukushima T."/>
            <person name="Furuno M."/>
            <person name="Futaki S."/>
            <person name="Gariboldi M."/>
            <person name="Georgii-Hemming P."/>
            <person name="Gingeras T.R."/>
            <person name="Gojobori T."/>
            <person name="Green R.E."/>
            <person name="Gustincich S."/>
            <person name="Harbers M."/>
            <person name="Hayashi Y."/>
            <person name="Hensch T.K."/>
            <person name="Hirokawa N."/>
            <person name="Hill D."/>
            <person name="Huminiecki L."/>
            <person name="Iacono M."/>
            <person name="Ikeo K."/>
            <person name="Iwama A."/>
            <person name="Ishikawa T."/>
            <person name="Jakt M."/>
            <person name="Kanapin A."/>
            <person name="Katoh M."/>
            <person name="Kawasawa Y."/>
            <person name="Kelso J."/>
            <person name="Kitamura H."/>
            <person name="Kitano H."/>
            <person name="Kollias G."/>
            <person name="Krishnan S.P."/>
            <person name="Kruger A."/>
            <person name="Kummerfeld S.K."/>
            <person name="Kurochkin I.V."/>
            <person name="Lareau L.F."/>
            <person name="Lazarevic D."/>
            <person name="Lipovich L."/>
            <person name="Liu J."/>
            <person name="Liuni S."/>
            <person name="McWilliam S."/>
            <person name="Madan Babu M."/>
            <person name="Madera M."/>
            <person name="Marchionni L."/>
            <person name="Matsuda H."/>
            <person name="Matsuzawa S."/>
            <person name="Miki H."/>
            <person name="Mignone F."/>
            <person name="Miyake S."/>
            <person name="Morris K."/>
            <person name="Mottagui-Tabar S."/>
            <person name="Mulder N."/>
            <person name="Nakano N."/>
            <person name="Nakauchi H."/>
            <person name="Ng P."/>
            <person name="Nilsson R."/>
            <person name="Nishiguchi S."/>
            <person name="Nishikawa S."/>
            <person name="Nori F."/>
            <person name="Ohara O."/>
            <person name="Okazaki Y."/>
            <person name="Orlando V."/>
            <person name="Pang K.C."/>
            <person name="Pavan W.J."/>
            <person name="Pavesi G."/>
            <person name="Pesole G."/>
            <person name="Petrovsky N."/>
            <person name="Piazza S."/>
            <person name="Reed J."/>
            <person name="Reid J.F."/>
            <person name="Ring B.Z."/>
            <person name="Ringwald M."/>
            <person name="Rost B."/>
            <person name="Ruan Y."/>
            <person name="Salzberg S.L."/>
            <person name="Sandelin A."/>
            <person name="Schneider C."/>
            <person name="Schoenbach C."/>
            <person name="Sekiguchi K."/>
            <person name="Semple C.A."/>
            <person name="Seno S."/>
            <person name="Sessa L."/>
            <person name="Sheng Y."/>
            <person name="Shibata Y."/>
            <person name="Shimada H."/>
            <person name="Shimada K."/>
            <person name="Silva D."/>
            <person name="Sinclair B."/>
            <person name="Sperling S."/>
            <person name="Stupka E."/>
            <person name="Sugiura K."/>
            <person name="Sultana R."/>
            <person name="Takenaka Y."/>
            <person name="Taki K."/>
            <person name="Tammoja K."/>
            <person name="Tan S.L."/>
            <person name="Tang S."/>
            <person name="Taylor M.S."/>
            <person name="Tegner J."/>
            <person name="Teichmann S.A."/>
            <person name="Ueda H.R."/>
            <person name="van Nimwegen E."/>
            <person name="Verardo R."/>
            <person name="Wei C.L."/>
            <person name="Yagi K."/>
            <person name="Yamanishi H."/>
            <person name="Zabarovsky E."/>
            <person name="Zhu S."/>
            <person name="Zimmer A."/>
            <person name="Hide W."/>
            <person name="Bult C."/>
            <person name="Grimmond S.M."/>
            <person name="Teasdale R.D."/>
            <person name="Liu E.T."/>
            <person name="Brusic V."/>
            <person name="Quackenbush J."/>
            <person name="Wahlestedt C."/>
            <person name="Mattick J.S."/>
            <person name="Hume D.A."/>
            <person name="Kai C."/>
            <person name="Sasaki D."/>
            <person name="Tomaru Y."/>
            <person name="Fukuda S."/>
            <person name="Kanamori-Katayama M."/>
            <person name="Suzuki M."/>
            <person name="Aoki J."/>
            <person name="Arakawa T."/>
            <person name="Iida J."/>
            <person name="Imamura K."/>
            <person name="Itoh M."/>
            <person name="Kato T."/>
            <person name="Kawaji H."/>
            <person name="Kawagashira N."/>
            <person name="Kawashima T."/>
            <person name="Kojima M."/>
            <person name="Kondo S."/>
            <person name="Konno H."/>
            <person name="Nakano K."/>
            <person name="Ninomiya N."/>
            <person name="Nishio T."/>
            <person name="Okada M."/>
            <person name="Plessy C."/>
            <person name="Shibata K."/>
            <person name="Shiraki T."/>
            <person name="Suzuki S."/>
            <person name="Tagami M."/>
            <person name="Waki K."/>
            <person name="Watahiki A."/>
            <person name="Okamura-Oho Y."/>
            <person name="Suzuki H."/>
            <person name="Kawai J."/>
            <person name="Hayashizaki Y."/>
        </authorList>
    </citation>
    <scope>NUCLEOTIDE SEQUENCE [LARGE SCALE MRNA] (ISOFORMS 1 AND 2)</scope>
    <source>
        <strain>NOD</strain>
    </source>
</reference>
<reference key="5">
    <citation type="journal article" date="2004" name="Genome Res.">
        <title>The status, quality, and expansion of the NIH full-length cDNA project: the Mammalian Gene Collection (MGC).</title>
        <authorList>
            <consortium name="The MGC Project Team"/>
        </authorList>
    </citation>
    <scope>NUCLEOTIDE SEQUENCE [LARGE SCALE MRNA] (ISOFORM 5)</scope>
    <source>
        <strain>C57BL/6J</strain>
        <tissue>Kidney</tissue>
    </source>
</reference>
<reference key="6">
    <citation type="journal article" date="2009" name="PLoS Biol.">
        <title>Lineage-specific biology revealed by a finished genome assembly of the mouse.</title>
        <authorList>
            <person name="Church D.M."/>
            <person name="Goodstadt L."/>
            <person name="Hillier L.W."/>
            <person name="Zody M.C."/>
            <person name="Goldstein S."/>
            <person name="She X."/>
            <person name="Bult C.J."/>
            <person name="Agarwala R."/>
            <person name="Cherry J.L."/>
            <person name="DiCuccio M."/>
            <person name="Hlavina W."/>
            <person name="Kapustin Y."/>
            <person name="Meric P."/>
            <person name="Maglott D."/>
            <person name="Birtle Z."/>
            <person name="Marques A.C."/>
            <person name="Graves T."/>
            <person name="Zhou S."/>
            <person name="Teague B."/>
            <person name="Potamousis K."/>
            <person name="Churas C."/>
            <person name="Place M."/>
            <person name="Herschleb J."/>
            <person name="Runnheim R."/>
            <person name="Forrest D."/>
            <person name="Amos-Landgraf J."/>
            <person name="Schwartz D.C."/>
            <person name="Cheng Z."/>
            <person name="Lindblad-Toh K."/>
            <person name="Eichler E.E."/>
            <person name="Ponting C.P."/>
        </authorList>
    </citation>
    <scope>NUCLEOTIDE SEQUENCE [LARGE SCALE GENOMIC DNA]</scope>
    <source>
        <strain>C57BL/6J</strain>
    </source>
</reference>
<reference key="7">
    <citation type="journal article" date="2001" name="EMBO Rep.">
        <title>Extracellular signal regulated kinase 5 (ERK5) is required for the differentiation of muscle cells.</title>
        <authorList>
            <person name="Dinev D."/>
            <person name="Jordan B.W.M."/>
            <person name="Neufeld B."/>
            <person name="Lee J.-D."/>
            <person name="Lindemann D."/>
            <person name="Rapp U.R."/>
            <person name="Ludwig S."/>
        </authorList>
    </citation>
    <scope>FUNCTION</scope>
</reference>
<reference key="8">
    <citation type="journal article" date="2001" name="J. Biol. Chem.">
        <title>Granulocyte colony-stimulating factor induces ERK5 activation, which is differentially regulated by protein-tyrosine kinases and protein kinase C. Regulation of cell proliferation and survival.</title>
        <authorList>
            <person name="Dong F."/>
            <person name="Gutkind J.S."/>
            <person name="Larner A.C."/>
        </authorList>
    </citation>
    <scope>FUNCTION</scope>
</reference>
<reference key="9">
    <citation type="journal article" date="2004" name="J. Clin. Invest.">
        <title>Targeted deletion of BMK1/ERK5 in adult mice perturbs vascular integrity and leads to endothelial failure.</title>
        <authorList>
            <person name="Hayashi M."/>
            <person name="Kim S.W."/>
            <person name="Imanaka-Yoshida K."/>
            <person name="Yoshida T."/>
            <person name="Abel E.D."/>
            <person name="Eliceiri B."/>
            <person name="Yang Y."/>
            <person name="Ulevitch R.J."/>
            <person name="Lee J.D."/>
        </authorList>
    </citation>
    <scope>FUNCTION</scope>
</reference>
<reference key="10">
    <citation type="journal article" date="2010" name="FASEB J.">
        <title>Novel role of C terminus of Hsc70-interacting protein (CHIP) ubiquitin ligase on inhibiting cardiac apoptosis and dysfunction via regulating ERK5-mediated degradation of inducible cAMP early repressor.</title>
        <authorList>
            <person name="Woo C.H."/>
            <person name="Le N.T."/>
            <person name="Shishido T."/>
            <person name="Chang E."/>
            <person name="Lee H."/>
            <person name="Heo K.S."/>
            <person name="Mickelsen D.M."/>
            <person name="Lu Y."/>
            <person name="McClain C."/>
            <person name="Spangenberg T."/>
            <person name="Yan C."/>
            <person name="Molina C.A."/>
            <person name="Yang J."/>
            <person name="Patterson C."/>
            <person name="Abe J."/>
        </authorList>
    </citation>
    <scope>INTERACTION WITH STUB1</scope>
</reference>
<reference key="11">
    <citation type="journal article" date="2013" name="Mol. Cell. Biol.">
        <title>Canonical and kinase activity-independent mechanisms for extracellular signal-regulated kinase 5 (ERK5) nuclear translocation require dissociation of Hsp90 from the ERK5-Cdc37 complex.</title>
        <authorList>
            <person name="Erazo T."/>
            <person name="Moreno A."/>
            <person name="Ruiz-Babot G."/>
            <person name="Rodriguez-Asiain A."/>
            <person name="Morrice N.A."/>
            <person name="Espadamala J."/>
            <person name="Bayascas J.R."/>
            <person name="Gomez N."/>
            <person name="Lizcano J.M."/>
        </authorList>
    </citation>
    <scope>INTERACTION WITH HSP90AB1</scope>
</reference>
<comment type="function">
    <text evidence="1 2 7 8 9 10 11">Plays a role in various cellular processes such as proliferation, differentiation and cell survival. The upstream activator of MAPK7 is the MAPK kinase MAP2K5. Upon activation, it translocates to the nucleus and phosphorylates various downstream targets including MEF2C. EGF activates MAPK7 through a Ras-independent and MAP2K5-dependent pathway. As part of the MAPK/ERK signaling pathway, acts as a negative regulator of apoptosis in cardiomyocytes via interaction with STUB1/CHIP and promotion of STUB1-mediated ubiquitination and degradation of ICER-type isoforms of CREM (By similarity). May have a role in muscle cell differentiation. May be important for endothelial function and maintenance of blood vessel integrity. MAP2K5 and MAPK7 interact specifically with one another and not with MEK1/ERK1 or MEK2/ERK2 pathways. Phosphorylates SGK1 at Ser-78 and this is required for growth factor-induced cell cycle progression (By similarity). Involved in the regulation of p53/TP53 by disrupting the PML-MDM2 interaction (By similarity).</text>
</comment>
<comment type="catalytic activity">
    <reaction>
        <text>L-seryl-[protein] + ATP = O-phospho-L-seryl-[protein] + ADP + H(+)</text>
        <dbReference type="Rhea" id="RHEA:17989"/>
        <dbReference type="Rhea" id="RHEA-COMP:9863"/>
        <dbReference type="Rhea" id="RHEA-COMP:11604"/>
        <dbReference type="ChEBI" id="CHEBI:15378"/>
        <dbReference type="ChEBI" id="CHEBI:29999"/>
        <dbReference type="ChEBI" id="CHEBI:30616"/>
        <dbReference type="ChEBI" id="CHEBI:83421"/>
        <dbReference type="ChEBI" id="CHEBI:456216"/>
        <dbReference type="EC" id="2.7.11.24"/>
    </reaction>
</comment>
<comment type="catalytic activity">
    <reaction>
        <text>L-threonyl-[protein] + ATP = O-phospho-L-threonyl-[protein] + ADP + H(+)</text>
        <dbReference type="Rhea" id="RHEA:46608"/>
        <dbReference type="Rhea" id="RHEA-COMP:11060"/>
        <dbReference type="Rhea" id="RHEA-COMP:11605"/>
        <dbReference type="ChEBI" id="CHEBI:15378"/>
        <dbReference type="ChEBI" id="CHEBI:30013"/>
        <dbReference type="ChEBI" id="CHEBI:30616"/>
        <dbReference type="ChEBI" id="CHEBI:61977"/>
        <dbReference type="ChEBI" id="CHEBI:456216"/>
        <dbReference type="EC" id="2.7.11.24"/>
    </reaction>
</comment>
<comment type="cofactor">
    <cofactor evidence="1">
        <name>Mg(2+)</name>
        <dbReference type="ChEBI" id="CHEBI:18420"/>
    </cofactor>
</comment>
<comment type="activity regulation">
    <text evidence="1">Activated by tyrosine and threonine phosphorylation. Activated in response to hyperosmolarity, hydrogen peroxide, and epidermal growth factor (EGF) (By similarity).</text>
</comment>
<comment type="subunit">
    <text evidence="1 12 13">Interacts with MAP2K5 (By similarity). Forms oligomers. Interacts with MEF2A, MEF2C and MEF2D; the interaction phosphorylates the MEF2s and enhances transcriptional activity of MEF2A, MEF2C but not MEF2D (By similarity). Interacts with SGK1 (By similarity). Interacts with PML (By similarity). Interacts (via N-terminal half) with HSP90AB1-CDC37 chaperone complex in resting cells; the interaction is MAP2K5-independent and prevents MAPK7 from ubiquitination and proteasomal degradation (PubMed:23428871). Interacts with STUB1/CHIP; the interaction is enhanced in the presence of IGF1 or MAP2K5 and promotes STUB1/CHIP E3 ligase activity (PubMed:20724525).</text>
</comment>
<comment type="subcellular location">
    <subcellularLocation>
        <location evidence="7">Cytoplasm</location>
    </subcellularLocation>
    <subcellularLocation>
        <location evidence="7">Nucleus</location>
    </subcellularLocation>
    <subcellularLocation>
        <location evidence="1">Nucleus</location>
        <location evidence="1">PML body</location>
    </subcellularLocation>
    <text evidence="1">Translocates to the nucleus upon activation.</text>
</comment>
<comment type="subcellular location">
    <molecule>Isoform 1</molecule>
    <subcellularLocation>
        <location evidence="1">Cytoplasm</location>
    </subcellularLocation>
    <subcellularLocation>
        <location evidence="1">Nucleus</location>
    </subcellularLocation>
    <text evidence="1">Isoform 1 is detected in cytoplasm and nucleus.</text>
</comment>
<comment type="subcellular location">
    <molecule>Isoform 2</molecule>
    <subcellularLocation>
        <location evidence="1">Nucleus</location>
    </subcellularLocation>
    <text evidence="1">Isoform 2 is detected only in the nucleus. Translocates to the nucleus upon activation (By similarity).</text>
</comment>
<comment type="subcellular location">
    <molecule>Isoform 3</molecule>
    <subcellularLocation>
        <location evidence="1">Nucleus</location>
    </subcellularLocation>
    <text evidence="1">Isoform 2 is detected only in the nucleus. Translocates to the nucleus upon activation (By similarity).</text>
</comment>
<comment type="alternative products">
    <event type="alternative splicing"/>
    <isoform>
        <id>Q9WVS8-1</id>
        <name>1</name>
        <name>Big MAP kinase 1a</name>
        <name>mERK5a</name>
        <sequence type="displayed"/>
    </isoform>
    <isoform>
        <id>Q9WVS8-2</id>
        <name>2</name>
        <name>Big MAP kinase 1b</name>
        <name>mERK5b</name>
        <sequence type="described" ref="VSP_035202"/>
    </isoform>
    <isoform>
        <id>Q9WVS8-3</id>
        <name>3</name>
        <name>Big MAP kinase 1c</name>
        <name>mERK5c</name>
        <sequence type="described" ref="VSP_035201"/>
    </isoform>
    <isoform>
        <id>Q9WVS8-4</id>
        <name>4</name>
        <name>Big MAP kinase 1d</name>
        <name>mERK5-T</name>
        <sequence type="described" ref="VSP_035203"/>
    </isoform>
    <isoform>
        <id>Q9WVS8-5</id>
        <name>5</name>
        <sequence type="described" ref="VSP_035204"/>
    </isoform>
</comment>
<comment type="tissue specificity">
    <text evidence="7">Detected in testis, brain, kidney, lung and heart. Detected in total embryo (at protein level).</text>
</comment>
<comment type="domain">
    <text>The second proline-rich region may interact with actin targeting the kinase to a specific location in the cell.</text>
</comment>
<comment type="domain">
    <text>The TXY motif contains the threonine and tyrosine residues whose phosphorylation activates the MAP kinases.</text>
</comment>
<comment type="PTM">
    <text evidence="1">Dually phosphorylated on Thr-219 and Tyr-221, which activates the enzyme.</text>
</comment>
<comment type="miscellaneous">
    <molecule>Isoform 2</molecule>
    <text evidence="18">May not have a kinase activity. May not stimulate MEF2C activity. May function as dominant negative inhibitor of the ERK5 signaling pathway.</text>
</comment>
<comment type="miscellaneous">
    <molecule>Isoform 3</molecule>
    <text evidence="18">May not have a kinase activity. May not stimulate MEF2C activity. May function as dominant negative inhibitor of the ERK5 signaling pathway.</text>
</comment>
<comment type="miscellaneous">
    <molecule>Isoform 4</molecule>
    <text evidence="18">Unable to translocate from the cytoplasm to the nucleus.</text>
</comment>
<comment type="similarity">
    <text evidence="18">Belongs to the protein kinase superfamily. CMGC Ser/Thr protein kinase family. MAP kinase subfamily.</text>
</comment>
<organism>
    <name type="scientific">Mus musculus</name>
    <name type="common">Mouse</name>
    <dbReference type="NCBI Taxonomy" id="10090"/>
    <lineage>
        <taxon>Eukaryota</taxon>
        <taxon>Metazoa</taxon>
        <taxon>Chordata</taxon>
        <taxon>Craniata</taxon>
        <taxon>Vertebrata</taxon>
        <taxon>Euteleostomi</taxon>
        <taxon>Mammalia</taxon>
        <taxon>Eutheria</taxon>
        <taxon>Euarchontoglires</taxon>
        <taxon>Glires</taxon>
        <taxon>Rodentia</taxon>
        <taxon>Myomorpha</taxon>
        <taxon>Muroidea</taxon>
        <taxon>Muridae</taxon>
        <taxon>Murinae</taxon>
        <taxon>Mus</taxon>
        <taxon>Mus</taxon>
    </lineage>
</organism>
<feature type="initiator methionine" description="Removed" evidence="3">
    <location>
        <position position="1"/>
    </location>
</feature>
<feature type="chain" id="PRO_0000186261" description="Mitogen-activated protein kinase 7">
    <location>
        <begin position="2"/>
        <end position="806"/>
    </location>
</feature>
<feature type="domain" description="Protein kinase" evidence="4">
    <location>
        <begin position="55"/>
        <end position="347"/>
    </location>
</feature>
<feature type="region of interest" description="Disordered" evidence="6">
    <location>
        <begin position="1"/>
        <end position="23"/>
    </location>
</feature>
<feature type="region of interest" description="Required for cytoplasmic targeting">
    <location>
        <begin position="2"/>
        <end position="77"/>
    </location>
</feature>
<feature type="region of interest" description="Required for binding to MAP2K5">
    <location>
        <begin position="78"/>
        <end position="139"/>
    </location>
</feature>
<feature type="region of interest" description="Necessary for oligomerization">
    <location>
        <begin position="140"/>
        <end position="406"/>
    </location>
</feature>
<feature type="region of interest" description="May not be required for kinase activity; required to stimulate MEF2C activity">
    <location>
        <begin position="407"/>
        <end position="806"/>
    </location>
</feature>
<feature type="region of interest" description="Disordered" evidence="6">
    <location>
        <begin position="424"/>
        <end position="473"/>
    </location>
</feature>
<feature type="region of interest" description="Disordered" evidence="6">
    <location>
        <begin position="488"/>
        <end position="727"/>
    </location>
</feature>
<feature type="short sequence motif" description="TXY">
    <location>
        <begin position="219"/>
        <end position="221"/>
    </location>
</feature>
<feature type="short sequence motif" description="Nuclear localization signal">
    <location>
        <begin position="505"/>
        <end position="539"/>
    </location>
</feature>
<feature type="compositionally biased region" description="Pro residues" evidence="6">
    <location>
        <begin position="433"/>
        <end position="443"/>
    </location>
</feature>
<feature type="compositionally biased region" description="Basic and acidic residues" evidence="6">
    <location>
        <begin position="502"/>
        <end position="519"/>
    </location>
</feature>
<feature type="compositionally biased region" description="Basic and acidic residues" evidence="6">
    <location>
        <begin position="527"/>
        <end position="544"/>
    </location>
</feature>
<feature type="compositionally biased region" description="Basic and acidic residues" evidence="6">
    <location>
        <begin position="563"/>
        <end position="573"/>
    </location>
</feature>
<feature type="compositionally biased region" description="Pro residues" evidence="6">
    <location>
        <begin position="578"/>
        <end position="592"/>
    </location>
</feature>
<feature type="compositionally biased region" description="Low complexity" evidence="6">
    <location>
        <begin position="593"/>
        <end position="603"/>
    </location>
</feature>
<feature type="compositionally biased region" description="Pro residues" evidence="6">
    <location>
        <begin position="627"/>
        <end position="643"/>
    </location>
</feature>
<feature type="compositionally biased region" description="Polar residues" evidence="6">
    <location>
        <begin position="647"/>
        <end position="660"/>
    </location>
</feature>
<feature type="compositionally biased region" description="Pro residues" evidence="6">
    <location>
        <begin position="678"/>
        <end position="689"/>
    </location>
</feature>
<feature type="compositionally biased region" description="Polar residues" evidence="6">
    <location>
        <begin position="693"/>
        <end position="710"/>
    </location>
</feature>
<feature type="active site" description="Proton acceptor" evidence="4 5">
    <location>
        <position position="182"/>
    </location>
</feature>
<feature type="binding site" evidence="4">
    <location>
        <begin position="61"/>
        <end position="69"/>
    </location>
    <ligand>
        <name>ATP</name>
        <dbReference type="ChEBI" id="CHEBI:30616"/>
    </ligand>
</feature>
<feature type="binding site" evidence="4">
    <location>
        <position position="84"/>
    </location>
    <ligand>
        <name>ATP</name>
        <dbReference type="ChEBI" id="CHEBI:30616"/>
    </ligand>
</feature>
<feature type="modified residue" description="N-acetylalanine" evidence="3">
    <location>
        <position position="2"/>
    </location>
</feature>
<feature type="modified residue" description="Phosphoserine" evidence="3">
    <location>
        <position position="710"/>
    </location>
</feature>
<feature type="modified residue" description="Phosphothreonine" evidence="3">
    <location>
        <position position="723"/>
    </location>
</feature>
<feature type="splice variant" id="VSP_035201" description="In isoform 3." evidence="14">
    <location>
        <begin position="1"/>
        <end position="139"/>
    </location>
</feature>
<feature type="splice variant" id="VSP_035202" description="In isoform 2." evidence="14 17">
    <original>MAEPLKEEDGEDGSGEPPGRVKAEPVHTAASVVAKNLALLKARSFDVTFDVGDEYEIIETIGNGAYGVVSSARRRLT</original>
    <variation>MCGLLSRG</variation>
    <location>
        <begin position="1"/>
        <end position="77"/>
    </location>
</feature>
<feature type="splice variant" id="VSP_035203" description="In isoform 4." evidence="16">
    <original>DGPSAPLEAPEPRKPVTAQERQREREEKRRRRQERAKEREKRRQERERKERGAGTLGGPSTDPLAGLVLSDNDRSLLERWTRMARPPAPAPAPAPAPAPAPSSAQPTSTPTGPVSQSTGPLQPAGSIPGPASQPVCPPPGPVPQPAGPIPAPLQTAPSTSLLASQSLVPPSGLPGSGAPEVLPYFPSGPPPPDPGLTPQPSTSESPDVNLVTQQLSKSQVEDPLPPVFSGTPKGSGAGYGVGFDLEEFLNQSFDMGVADGPQDGQADSASLSASLLADWLEGHGMNPADIESLQREIQMDSPMLLSDLPDLQEP</original>
    <variation>GGVWAQQLSG</variation>
    <location>
        <begin position="493"/>
        <end position="806"/>
    </location>
</feature>
<feature type="splice variant" id="VSP_035204" description="In isoform 5." evidence="15">
    <location>
        <begin position="757"/>
        <end position="806"/>
    </location>
</feature>
<feature type="sequence conflict" description="In Ref. 4; BAE28357." evidence="18" ref="4">
    <original>N</original>
    <variation>D</variation>
    <location>
        <position position="191"/>
    </location>
</feature>
<feature type="sequence conflict" description="In Ref. 4; BAE28357." evidence="18" ref="4">
    <original>P</original>
    <variation>H</variation>
    <location>
        <position position="308"/>
    </location>
</feature>
<feature type="sequence conflict" description="In Ref. 5; AAI00399." evidence="18" ref="5">
    <original>E</original>
    <variation>K</variation>
    <location>
        <position position="331"/>
    </location>
</feature>
<feature type="sequence conflict" description="In Ref. 2; AAD39394/AAD39395/AAD39396." evidence="18" ref="2">
    <original>A</original>
    <variation>V</variation>
    <location>
        <position position="409"/>
    </location>
</feature>
<feature type="sequence conflict" description="In Ref. 2; AAD39394/AAD39395/AAD39396." evidence="18" ref="2">
    <original>A</original>
    <variation>R</variation>
    <location>
        <position position="424"/>
    </location>
</feature>
<feature type="sequence conflict" description="In Ref. 4; BAE28357/BAE33103." evidence="18" ref="4">
    <original>P</original>
    <variation>PPAPA</variation>
    <location>
        <position position="578"/>
    </location>
</feature>
<feature type="sequence conflict" description="In Ref. 2; AAD39394/AAD39395/AAD39396." evidence="18" ref="2">
    <original>A</original>
    <variation>R</variation>
    <location>
        <position position="588"/>
    </location>
</feature>
<feature type="sequence conflict" description="In Ref. 2; AAD39394/AAD39395/AAD39396." evidence="18" ref="2">
    <original>A</original>
    <variation>Q</variation>
    <location>
        <position position="592"/>
    </location>
</feature>
<feature type="sequence conflict" description="In Ref. 2; AAD39394/AAD39395/AAD39396." evidence="18" ref="2">
    <original>S</original>
    <variation>C</variation>
    <location>
        <position position="618"/>
    </location>
</feature>
<feature type="sequence conflict" description="In Ref. 2; AAD39394/AAD39395/AAD39396." evidence="18" ref="2">
    <original>P</original>
    <variation>A</variation>
    <location>
        <position position="642"/>
    </location>
</feature>
<feature type="sequence conflict" description="In Ref. 4; BAE28357." evidence="18" ref="4">
    <original>L</original>
    <variation>V</variation>
    <location>
        <position position="803"/>
    </location>
</feature>
<name>MK07_MOUSE</name>
<keyword id="KW-0007">Acetylation</keyword>
<keyword id="KW-0025">Alternative splicing</keyword>
<keyword id="KW-0067">ATP-binding</keyword>
<keyword id="KW-0131">Cell cycle</keyword>
<keyword id="KW-0963">Cytoplasm</keyword>
<keyword id="KW-0221">Differentiation</keyword>
<keyword id="KW-0418">Kinase</keyword>
<keyword id="KW-0547">Nucleotide-binding</keyword>
<keyword id="KW-0539">Nucleus</keyword>
<keyword id="KW-0597">Phosphoprotein</keyword>
<keyword id="KW-1185">Reference proteome</keyword>
<keyword id="KW-0723">Serine/threonine-protein kinase</keyword>
<keyword id="KW-0808">Transferase</keyword>
<accession>Q9WVS8</accession>
<accession>Q3U2N7</accession>
<accession>Q3UG52</accession>
<accession>Q497T0</accession>
<accession>Q5NCN6</accession>
<accession>Q5NCN7</accession>
<accession>Q5NCN9</accession>
<accession>Q6QLU8</accession>
<accession>Q9R1D9</accession>
<accession>Q9WVF3</accession>
<accession>Q9WVF4</accession>
<dbReference type="EC" id="2.7.11.24"/>
<dbReference type="EMBL" id="AB019373">
    <property type="protein sequence ID" value="BAA82039.1"/>
    <property type="molecule type" value="mRNA"/>
</dbReference>
<dbReference type="EMBL" id="AF126159">
    <property type="protein sequence ID" value="AAD39394.1"/>
    <property type="molecule type" value="mRNA"/>
</dbReference>
<dbReference type="EMBL" id="AF126160">
    <property type="protein sequence ID" value="AAD39395.1"/>
    <property type="molecule type" value="mRNA"/>
</dbReference>
<dbReference type="EMBL" id="AF126161">
    <property type="protein sequence ID" value="AAD39396.1"/>
    <property type="molecule type" value="mRNA"/>
</dbReference>
<dbReference type="EMBL" id="AK148119">
    <property type="protein sequence ID" value="BAE28357.1"/>
    <property type="molecule type" value="mRNA"/>
</dbReference>
<dbReference type="EMBL" id="AK155187">
    <property type="protein sequence ID" value="BAE33103.1"/>
    <property type="molecule type" value="mRNA"/>
</dbReference>
<dbReference type="EMBL" id="AY534740">
    <property type="protein sequence ID" value="AAS38576.1"/>
    <property type="molecule type" value="mRNA"/>
</dbReference>
<dbReference type="EMBL" id="BC100398">
    <property type="protein sequence ID" value="AAI00399.1"/>
    <property type="molecule type" value="mRNA"/>
</dbReference>
<dbReference type="EMBL" id="AL604029">
    <property type="status" value="NOT_ANNOTATED_CDS"/>
    <property type="molecule type" value="Genomic_DNA"/>
</dbReference>
<dbReference type="CCDS" id="CCDS24814.1">
    <molecule id="Q9WVS8-1"/>
</dbReference>
<dbReference type="CCDS" id="CCDS70205.1">
    <molecule id="Q9WVS8-2"/>
</dbReference>
<dbReference type="RefSeq" id="NP_001277962.1">
    <molecule id="Q9WVS8-2"/>
    <property type="nucleotide sequence ID" value="NM_001291033.1"/>
</dbReference>
<dbReference type="RefSeq" id="NP_001277963.1">
    <molecule id="Q9WVS8-1"/>
    <property type="nucleotide sequence ID" value="NM_001291034.1"/>
</dbReference>
<dbReference type="RefSeq" id="NP_001277964.1">
    <molecule id="Q9WVS8-3"/>
    <property type="nucleotide sequence ID" value="NM_001291035.1"/>
</dbReference>
<dbReference type="RefSeq" id="NP_001277965.1">
    <molecule id="Q9WVS8-3"/>
    <property type="nucleotide sequence ID" value="NM_001291036.1"/>
</dbReference>
<dbReference type="RefSeq" id="NP_001277966.1">
    <property type="nucleotide sequence ID" value="NM_001291037.1"/>
</dbReference>
<dbReference type="RefSeq" id="NP_001348918.1">
    <molecule id="Q9WVS8-3"/>
    <property type="nucleotide sequence ID" value="NM_001361989.1"/>
</dbReference>
<dbReference type="RefSeq" id="NP_035971.1">
    <molecule id="Q9WVS8-1"/>
    <property type="nucleotide sequence ID" value="NM_011841.2"/>
</dbReference>
<dbReference type="RefSeq" id="XP_006533340.1">
    <molecule id="Q9WVS8-1"/>
    <property type="nucleotide sequence ID" value="XM_006533277.5"/>
</dbReference>
<dbReference type="RefSeq" id="XP_006533343.1">
    <molecule id="Q9WVS8-3"/>
    <property type="nucleotide sequence ID" value="XM_006533280.5"/>
</dbReference>
<dbReference type="RefSeq" id="XP_006533344.1">
    <property type="nucleotide sequence ID" value="XM_006533281.3"/>
</dbReference>
<dbReference type="RefSeq" id="XP_006533347.1">
    <molecule id="Q9WVS8-3"/>
    <property type="nucleotide sequence ID" value="XM_006533284.5"/>
</dbReference>
<dbReference type="RefSeq" id="XP_006533348.1">
    <molecule id="Q9WVS8-3"/>
    <property type="nucleotide sequence ID" value="XM_006533285.5"/>
</dbReference>
<dbReference type="RefSeq" id="XP_006533349.1">
    <molecule id="Q9WVS8-3"/>
    <property type="nucleotide sequence ID" value="XM_006533286.5"/>
</dbReference>
<dbReference type="RefSeq" id="XP_030101845.1">
    <molecule id="Q9WVS8-2"/>
    <property type="nucleotide sequence ID" value="XM_030245985.2"/>
</dbReference>
<dbReference type="RefSeq" id="XP_030101846.1">
    <molecule id="Q9WVS8-2"/>
    <property type="nucleotide sequence ID" value="XM_030245986.2"/>
</dbReference>
<dbReference type="RefSeq" id="XP_030101850.1">
    <molecule id="Q9WVS8-3"/>
    <property type="nucleotide sequence ID" value="XM_030245990.2"/>
</dbReference>
<dbReference type="RefSeq" id="XP_030101851.1">
    <molecule id="Q9WVS8-3"/>
    <property type="nucleotide sequence ID" value="XM_030245991.2"/>
</dbReference>
<dbReference type="RefSeq" id="XP_030101853.1">
    <molecule id="Q9WVS8-3"/>
    <property type="nucleotide sequence ID" value="XM_030245993.2"/>
</dbReference>
<dbReference type="RefSeq" id="XP_036012577.1">
    <molecule id="Q9WVS8-3"/>
    <property type="nucleotide sequence ID" value="XM_036156684.1"/>
</dbReference>
<dbReference type="RefSeq" id="XP_036012578.1">
    <molecule id="Q9WVS8-3"/>
    <property type="nucleotide sequence ID" value="XM_036156685.1"/>
</dbReference>
<dbReference type="RefSeq" id="XP_036012579.1">
    <molecule id="Q9WVS8-3"/>
    <property type="nucleotide sequence ID" value="XM_036156686.1"/>
</dbReference>
<dbReference type="SMR" id="Q9WVS8"/>
<dbReference type="BioGRID" id="204806">
    <property type="interactions" value="6"/>
</dbReference>
<dbReference type="CORUM" id="Q9WVS8"/>
<dbReference type="FunCoup" id="Q9WVS8">
    <property type="interactions" value="3710"/>
</dbReference>
<dbReference type="STRING" id="10090.ENSMUSP00000078087"/>
<dbReference type="BindingDB" id="Q9WVS8"/>
<dbReference type="ChEMBL" id="CHEMBL5169206"/>
<dbReference type="iPTMnet" id="Q9WVS8"/>
<dbReference type="PhosphoSitePlus" id="Q9WVS8"/>
<dbReference type="PaxDb" id="10090-ENSMUSP00000078087"/>
<dbReference type="PeptideAtlas" id="Q9WVS8"/>
<dbReference type="ProteomicsDB" id="295670">
    <molecule id="Q9WVS8-1"/>
</dbReference>
<dbReference type="ProteomicsDB" id="295671">
    <molecule id="Q9WVS8-2"/>
</dbReference>
<dbReference type="ProteomicsDB" id="295672">
    <molecule id="Q9WVS8-3"/>
</dbReference>
<dbReference type="ProteomicsDB" id="295673">
    <molecule id="Q9WVS8-4"/>
</dbReference>
<dbReference type="ProteomicsDB" id="295674">
    <molecule id="Q9WVS8-5"/>
</dbReference>
<dbReference type="Pumba" id="Q9WVS8"/>
<dbReference type="Antibodypedia" id="4345">
    <property type="antibodies" value="670 antibodies from 40 providers"/>
</dbReference>
<dbReference type="DNASU" id="23939"/>
<dbReference type="Ensembl" id="ENSMUST00000079080.13">
    <molecule id="Q9WVS8-1"/>
    <property type="protein sequence ID" value="ENSMUSP00000078087.7"/>
    <property type="gene ID" value="ENSMUSG00000001034.18"/>
</dbReference>
<dbReference type="Ensembl" id="ENSMUST00000108714.2">
    <molecule id="Q9WVS8-2"/>
    <property type="protein sequence ID" value="ENSMUSP00000104354.2"/>
    <property type="gene ID" value="ENSMUSG00000001034.18"/>
</dbReference>
<dbReference type="GeneID" id="23939"/>
<dbReference type="KEGG" id="mmu:23939"/>
<dbReference type="UCSC" id="uc007jho.2">
    <molecule id="Q9WVS8-2"/>
    <property type="organism name" value="mouse"/>
</dbReference>
<dbReference type="UCSC" id="uc007jhp.2">
    <molecule id="Q9WVS8-1"/>
    <property type="organism name" value="mouse"/>
</dbReference>
<dbReference type="UCSC" id="uc007jht.1">
    <molecule id="Q9WVS8-4"/>
    <property type="organism name" value="mouse"/>
</dbReference>
<dbReference type="AGR" id="MGI:1346347"/>
<dbReference type="CTD" id="5598"/>
<dbReference type="MGI" id="MGI:1346347">
    <property type="gene designation" value="Mapk7"/>
</dbReference>
<dbReference type="VEuPathDB" id="HostDB:ENSMUSG00000001034"/>
<dbReference type="eggNOG" id="KOG0660">
    <property type="taxonomic scope" value="Eukaryota"/>
</dbReference>
<dbReference type="GeneTree" id="ENSGT00940000160215"/>
<dbReference type="HOGENOM" id="CLU_008789_1_0_1"/>
<dbReference type="InParanoid" id="Q9WVS8"/>
<dbReference type="OMA" id="RWTKMID"/>
<dbReference type="OrthoDB" id="192887at2759"/>
<dbReference type="PhylomeDB" id="Q9WVS8"/>
<dbReference type="TreeFam" id="TF105099"/>
<dbReference type="Reactome" id="R-MMU-198753">
    <property type="pathway name" value="ERK/MAPK targets"/>
</dbReference>
<dbReference type="Reactome" id="R-MMU-198765">
    <property type="pathway name" value="Signalling to ERK5"/>
</dbReference>
<dbReference type="Reactome" id="R-MMU-202670">
    <property type="pathway name" value="ERKs are inactivated"/>
</dbReference>
<dbReference type="Reactome" id="R-MMU-2559582">
    <property type="pathway name" value="Senescence-Associated Secretory Phenotype (SASP)"/>
</dbReference>
<dbReference type="Reactome" id="R-MMU-881907">
    <property type="pathway name" value="Gastrin-CREB signalling pathway via PKC and MAPK"/>
</dbReference>
<dbReference type="Reactome" id="R-MMU-8853659">
    <property type="pathway name" value="RET signaling"/>
</dbReference>
<dbReference type="BioGRID-ORCS" id="23939">
    <property type="hits" value="5 hits in 82 CRISPR screens"/>
</dbReference>
<dbReference type="ChiTaRS" id="Mapk7">
    <property type="organism name" value="mouse"/>
</dbReference>
<dbReference type="PRO" id="PR:Q9WVS8"/>
<dbReference type="Proteomes" id="UP000000589">
    <property type="component" value="Chromosome 11"/>
</dbReference>
<dbReference type="RNAct" id="Q9WVS8">
    <property type="molecule type" value="protein"/>
</dbReference>
<dbReference type="Bgee" id="ENSMUSG00000001034">
    <property type="expression patterns" value="Expressed in embryonic brain and 194 other cell types or tissues"/>
</dbReference>
<dbReference type="ExpressionAtlas" id="Q9WVS8">
    <property type="expression patterns" value="baseline and differential"/>
</dbReference>
<dbReference type="GO" id="GO:0005737">
    <property type="term" value="C:cytoplasm"/>
    <property type="evidence" value="ECO:0000314"/>
    <property type="project" value="MGI"/>
</dbReference>
<dbReference type="GO" id="GO:0005829">
    <property type="term" value="C:cytosol"/>
    <property type="evidence" value="ECO:0000314"/>
    <property type="project" value="MGI"/>
</dbReference>
<dbReference type="GO" id="GO:0005634">
    <property type="term" value="C:nucleus"/>
    <property type="evidence" value="ECO:0000314"/>
    <property type="project" value="MGI"/>
</dbReference>
<dbReference type="GO" id="GO:0016605">
    <property type="term" value="C:PML body"/>
    <property type="evidence" value="ECO:0000250"/>
    <property type="project" value="UniProtKB"/>
</dbReference>
<dbReference type="GO" id="GO:0005524">
    <property type="term" value="F:ATP binding"/>
    <property type="evidence" value="ECO:0007669"/>
    <property type="project" value="UniProtKB-KW"/>
</dbReference>
<dbReference type="GO" id="GO:0004707">
    <property type="term" value="F:MAP kinase activity"/>
    <property type="evidence" value="ECO:0007669"/>
    <property type="project" value="UniProtKB-EC"/>
</dbReference>
<dbReference type="GO" id="GO:0051019">
    <property type="term" value="F:mitogen-activated protein kinase binding"/>
    <property type="evidence" value="ECO:0007669"/>
    <property type="project" value="Ensembl"/>
</dbReference>
<dbReference type="GO" id="GO:0004672">
    <property type="term" value="F:protein kinase activity"/>
    <property type="evidence" value="ECO:0000314"/>
    <property type="project" value="MGI"/>
</dbReference>
<dbReference type="GO" id="GO:0106310">
    <property type="term" value="F:protein serine kinase activity"/>
    <property type="evidence" value="ECO:0007669"/>
    <property type="project" value="RHEA"/>
</dbReference>
<dbReference type="GO" id="GO:0004674">
    <property type="term" value="F:protein serine/threonine kinase activity"/>
    <property type="evidence" value="ECO:0000314"/>
    <property type="project" value="MGI"/>
</dbReference>
<dbReference type="GO" id="GO:0033173">
    <property type="term" value="P:calcineurin-NFAT signaling cascade"/>
    <property type="evidence" value="ECO:0000315"/>
    <property type="project" value="MGI"/>
</dbReference>
<dbReference type="GO" id="GO:0030154">
    <property type="term" value="P:cell differentiation"/>
    <property type="evidence" value="ECO:0007669"/>
    <property type="project" value="UniProtKB-KW"/>
</dbReference>
<dbReference type="GO" id="GO:0070301">
    <property type="term" value="P:cellular response to hydrogen peroxide"/>
    <property type="evidence" value="ECO:0007669"/>
    <property type="project" value="Ensembl"/>
</dbReference>
<dbReference type="GO" id="GO:0071499">
    <property type="term" value="P:cellular response to laminar fluid shear stress"/>
    <property type="evidence" value="ECO:0007669"/>
    <property type="project" value="Ensembl"/>
</dbReference>
<dbReference type="GO" id="GO:0071560">
    <property type="term" value="P:cellular response to transforming growth factor beta stimulus"/>
    <property type="evidence" value="ECO:0007669"/>
    <property type="project" value="Ensembl"/>
</dbReference>
<dbReference type="GO" id="GO:0000165">
    <property type="term" value="P:MAPK cascade"/>
    <property type="evidence" value="ECO:0000250"/>
    <property type="project" value="UniProtKB"/>
</dbReference>
<dbReference type="GO" id="GO:0043066">
    <property type="term" value="P:negative regulation of apoptotic process"/>
    <property type="evidence" value="ECO:0000314"/>
    <property type="project" value="MGI"/>
</dbReference>
<dbReference type="GO" id="GO:0070885">
    <property type="term" value="P:negative regulation of calcineurin-NFAT signaling cascade"/>
    <property type="evidence" value="ECO:0000315"/>
    <property type="project" value="MGI"/>
</dbReference>
<dbReference type="GO" id="GO:2000352">
    <property type="term" value="P:negative regulation of endothelial cell apoptotic process"/>
    <property type="evidence" value="ECO:0007669"/>
    <property type="project" value="Ensembl"/>
</dbReference>
<dbReference type="GO" id="GO:0070377">
    <property type="term" value="P:negative regulation of ERK5 cascade"/>
    <property type="evidence" value="ECO:0000314"/>
    <property type="project" value="MGI"/>
</dbReference>
<dbReference type="GO" id="GO:2001240">
    <property type="term" value="P:negative regulation of extrinsic apoptotic signaling pathway in absence of ligand"/>
    <property type="evidence" value="ECO:0007669"/>
    <property type="project" value="Ensembl"/>
</dbReference>
<dbReference type="GO" id="GO:0034115">
    <property type="term" value="P:negative regulation of heterotypic cell-cell adhesion"/>
    <property type="evidence" value="ECO:0007669"/>
    <property type="project" value="Ensembl"/>
</dbReference>
<dbReference type="GO" id="GO:1902176">
    <property type="term" value="P:negative regulation of oxidative stress-induced intrinsic apoptotic signaling pathway"/>
    <property type="evidence" value="ECO:0007669"/>
    <property type="project" value="Ensembl"/>
</dbReference>
<dbReference type="GO" id="GO:0060761">
    <property type="term" value="P:negative regulation of response to cytokine stimulus"/>
    <property type="evidence" value="ECO:0007669"/>
    <property type="project" value="Ensembl"/>
</dbReference>
<dbReference type="GO" id="GO:0034392">
    <property type="term" value="P:negative regulation of smooth muscle cell apoptotic process"/>
    <property type="evidence" value="ECO:0000250"/>
    <property type="project" value="UniProtKB"/>
</dbReference>
<dbReference type="GO" id="GO:0051247">
    <property type="term" value="P:positive regulation of protein metabolic process"/>
    <property type="evidence" value="ECO:0007669"/>
    <property type="project" value="Ensembl"/>
</dbReference>
<dbReference type="GO" id="GO:0045944">
    <property type="term" value="P:positive regulation of transcription by RNA polymerase II"/>
    <property type="evidence" value="ECO:0007669"/>
    <property type="project" value="Ensembl"/>
</dbReference>
<dbReference type="GO" id="GO:0006468">
    <property type="term" value="P:protein phosphorylation"/>
    <property type="evidence" value="ECO:0000314"/>
    <property type="project" value="UniProtKB"/>
</dbReference>
<dbReference type="GO" id="GO:0045765">
    <property type="term" value="P:regulation of angiogenesis"/>
    <property type="evidence" value="ECO:0000315"/>
    <property type="project" value="MGI"/>
</dbReference>
<dbReference type="CDD" id="cd07855">
    <property type="entry name" value="STKc_ERK5"/>
    <property type="match status" value="1"/>
</dbReference>
<dbReference type="FunFam" id="1.10.510.10:FF:000013">
    <property type="entry name" value="Mitogen-activated protein kinase"/>
    <property type="match status" value="1"/>
</dbReference>
<dbReference type="FunFam" id="3.30.200.20:FF:000242">
    <property type="entry name" value="Mitogen-activated protein kinase"/>
    <property type="match status" value="1"/>
</dbReference>
<dbReference type="Gene3D" id="3.30.200.20">
    <property type="entry name" value="Phosphorylase Kinase, domain 1"/>
    <property type="match status" value="1"/>
</dbReference>
<dbReference type="Gene3D" id="1.10.510.10">
    <property type="entry name" value="Transferase(Phosphotransferase) domain 1"/>
    <property type="match status" value="1"/>
</dbReference>
<dbReference type="InterPro" id="IPR011009">
    <property type="entry name" value="Kinase-like_dom_sf"/>
</dbReference>
<dbReference type="InterPro" id="IPR050117">
    <property type="entry name" value="MAP_kinase"/>
</dbReference>
<dbReference type="InterPro" id="IPR003527">
    <property type="entry name" value="MAP_kinase_CS"/>
</dbReference>
<dbReference type="InterPro" id="IPR000719">
    <property type="entry name" value="Prot_kinase_dom"/>
</dbReference>
<dbReference type="InterPro" id="IPR017441">
    <property type="entry name" value="Protein_kinase_ATP_BS"/>
</dbReference>
<dbReference type="InterPro" id="IPR008271">
    <property type="entry name" value="Ser/Thr_kinase_AS"/>
</dbReference>
<dbReference type="PANTHER" id="PTHR24055">
    <property type="entry name" value="MITOGEN-ACTIVATED PROTEIN KINASE"/>
    <property type="match status" value="1"/>
</dbReference>
<dbReference type="Pfam" id="PF00069">
    <property type="entry name" value="Pkinase"/>
    <property type="match status" value="1"/>
</dbReference>
<dbReference type="SMART" id="SM00220">
    <property type="entry name" value="S_TKc"/>
    <property type="match status" value="1"/>
</dbReference>
<dbReference type="SUPFAM" id="SSF56112">
    <property type="entry name" value="Protein kinase-like (PK-like)"/>
    <property type="match status" value="1"/>
</dbReference>
<dbReference type="PROSITE" id="PS01351">
    <property type="entry name" value="MAPK"/>
    <property type="match status" value="1"/>
</dbReference>
<dbReference type="PROSITE" id="PS00107">
    <property type="entry name" value="PROTEIN_KINASE_ATP"/>
    <property type="match status" value="1"/>
</dbReference>
<dbReference type="PROSITE" id="PS50011">
    <property type="entry name" value="PROTEIN_KINASE_DOM"/>
    <property type="match status" value="1"/>
</dbReference>
<dbReference type="PROSITE" id="PS00108">
    <property type="entry name" value="PROTEIN_KINASE_ST"/>
    <property type="match status" value="1"/>
</dbReference>
<proteinExistence type="evidence at protein level"/>
<evidence type="ECO:0000250" key="1"/>
<evidence type="ECO:0000250" key="2">
    <source>
        <dbReference type="UniProtKB" id="P0C865"/>
    </source>
</evidence>
<evidence type="ECO:0000250" key="3">
    <source>
        <dbReference type="UniProtKB" id="Q13164"/>
    </source>
</evidence>
<evidence type="ECO:0000255" key="4">
    <source>
        <dbReference type="PROSITE-ProRule" id="PRU00159"/>
    </source>
</evidence>
<evidence type="ECO:0000255" key="5">
    <source>
        <dbReference type="PROSITE-ProRule" id="PRU10027"/>
    </source>
</evidence>
<evidence type="ECO:0000256" key="6">
    <source>
        <dbReference type="SAM" id="MobiDB-lite"/>
    </source>
</evidence>
<evidence type="ECO:0000269" key="7">
    <source>
    </source>
</evidence>
<evidence type="ECO:0000269" key="8">
    <source>
    </source>
</evidence>
<evidence type="ECO:0000269" key="9">
    <source>
    </source>
</evidence>
<evidence type="ECO:0000269" key="10">
    <source>
    </source>
</evidence>
<evidence type="ECO:0000269" key="11">
    <source>
    </source>
</evidence>
<evidence type="ECO:0000269" key="12">
    <source>
    </source>
</evidence>
<evidence type="ECO:0000269" key="13">
    <source>
    </source>
</evidence>
<evidence type="ECO:0000303" key="14">
    <source>
    </source>
</evidence>
<evidence type="ECO:0000303" key="15">
    <source>
    </source>
</evidence>
<evidence type="ECO:0000303" key="16">
    <source>
    </source>
</evidence>
<evidence type="ECO:0000303" key="17">
    <source>
    </source>
</evidence>
<evidence type="ECO:0000305" key="18"/>